<protein>
    <recommendedName>
        <fullName evidence="2">Nucleoprotein TPR</fullName>
    </recommendedName>
    <alternativeName>
        <fullName>NPC-associated intranuclear protein</fullName>
    </alternativeName>
    <alternativeName>
        <fullName>Translocated promoter region and nuclear basket protein</fullName>
    </alternativeName>
</protein>
<keyword id="KW-0131">Cell cycle</keyword>
<keyword id="KW-0132">Cell division</keyword>
<keyword id="KW-0137">Centromere</keyword>
<keyword id="KW-0158">Chromosome</keyword>
<keyword id="KW-0175">Coiled coil</keyword>
<keyword id="KW-0963">Cytoplasm</keyword>
<keyword id="KW-0206">Cytoskeleton</keyword>
<keyword id="KW-0995">Kinetochore</keyword>
<keyword id="KW-0472">Membrane</keyword>
<keyword id="KW-0498">Mitosis</keyword>
<keyword id="KW-0509">mRNA transport</keyword>
<keyword id="KW-0906">Nuclear pore complex</keyword>
<keyword id="KW-0539">Nucleus</keyword>
<keyword id="KW-0653">Protein transport</keyword>
<keyword id="KW-1185">Reference proteome</keyword>
<keyword id="KW-0811">Translocation</keyword>
<keyword id="KW-0813">Transport</keyword>
<accession>Q5EE04</accession>
<accession>P79992</accession>
<organism>
    <name type="scientific">Xenopus laevis</name>
    <name type="common">African clawed frog</name>
    <dbReference type="NCBI Taxonomy" id="8355"/>
    <lineage>
        <taxon>Eukaryota</taxon>
        <taxon>Metazoa</taxon>
        <taxon>Chordata</taxon>
        <taxon>Craniata</taxon>
        <taxon>Vertebrata</taxon>
        <taxon>Euteleostomi</taxon>
        <taxon>Amphibia</taxon>
        <taxon>Batrachia</taxon>
        <taxon>Anura</taxon>
        <taxon>Pipoidea</taxon>
        <taxon>Pipidae</taxon>
        <taxon>Xenopodinae</taxon>
        <taxon>Xenopus</taxon>
        <taxon>Xenopus</taxon>
    </lineage>
</organism>
<proteinExistence type="evidence at protein level"/>
<gene>
    <name evidence="2" type="primary">tpr</name>
</gene>
<feature type="chain" id="PRO_0000422102" description="Nucleoprotein TPR">
    <location>
        <begin position="1" status="less than"/>
        <end position="1997"/>
    </location>
</feature>
<feature type="region of interest" description="Disordered" evidence="4">
    <location>
        <begin position="672"/>
        <end position="706"/>
    </location>
</feature>
<feature type="region of interest" description="Disordered" evidence="4">
    <location>
        <begin position="1290"/>
        <end position="1352"/>
    </location>
</feature>
<feature type="region of interest" description="Disordered" evidence="4">
    <location>
        <begin position="1438"/>
        <end position="1529"/>
    </location>
</feature>
<feature type="region of interest" description="Disordered" evidence="4">
    <location>
        <begin position="1561"/>
        <end position="1752"/>
    </location>
</feature>
<feature type="region of interest" description="Disordered" evidence="4">
    <location>
        <begin position="1795"/>
        <end position="1832"/>
    </location>
</feature>
<feature type="region of interest" description="Disordered" evidence="4">
    <location>
        <begin position="1870"/>
        <end position="1997"/>
    </location>
</feature>
<feature type="coiled-coil region" evidence="3">
    <location>
        <begin position="1"/>
        <end position="36"/>
    </location>
</feature>
<feature type="coiled-coil region" evidence="3">
    <location>
        <begin position="101"/>
        <end position="277"/>
    </location>
</feature>
<feature type="coiled-coil region" evidence="3">
    <location>
        <begin position="335"/>
        <end position="1103"/>
    </location>
</feature>
<feature type="coiled-coil region" evidence="3">
    <location>
        <begin position="1129"/>
        <end position="1305"/>
    </location>
</feature>
<feature type="compositionally biased region" description="Basic and acidic residues" evidence="4">
    <location>
        <begin position="672"/>
        <end position="702"/>
    </location>
</feature>
<feature type="compositionally biased region" description="Basic and acidic residues" evidence="4">
    <location>
        <begin position="1290"/>
        <end position="1305"/>
    </location>
</feature>
<feature type="compositionally biased region" description="Polar residues" evidence="4">
    <location>
        <begin position="1306"/>
        <end position="1321"/>
    </location>
</feature>
<feature type="compositionally biased region" description="Polar residues" evidence="4">
    <location>
        <begin position="1328"/>
        <end position="1347"/>
    </location>
</feature>
<feature type="compositionally biased region" description="Polar residues" evidence="4">
    <location>
        <begin position="1446"/>
        <end position="1487"/>
    </location>
</feature>
<feature type="compositionally biased region" description="Basic and acidic residues" evidence="4">
    <location>
        <begin position="1511"/>
        <end position="1529"/>
    </location>
</feature>
<feature type="compositionally biased region" description="Polar residues" evidence="4">
    <location>
        <begin position="1561"/>
        <end position="1587"/>
    </location>
</feature>
<feature type="compositionally biased region" description="Acidic residues" evidence="4">
    <location>
        <begin position="1601"/>
        <end position="1637"/>
    </location>
</feature>
<feature type="compositionally biased region" description="Acidic residues" evidence="4">
    <location>
        <begin position="1644"/>
        <end position="1667"/>
    </location>
</feature>
<feature type="compositionally biased region" description="Polar residues" evidence="4">
    <location>
        <begin position="1692"/>
        <end position="1709"/>
    </location>
</feature>
<feature type="compositionally biased region" description="Polar residues" evidence="4">
    <location>
        <begin position="1817"/>
        <end position="1830"/>
    </location>
</feature>
<feature type="compositionally biased region" description="Polar residues" evidence="4">
    <location>
        <begin position="1879"/>
        <end position="1899"/>
    </location>
</feature>
<feature type="compositionally biased region" description="Acidic residues" evidence="4">
    <location>
        <begin position="1902"/>
        <end position="1915"/>
    </location>
</feature>
<feature type="compositionally biased region" description="Low complexity" evidence="4">
    <location>
        <begin position="1950"/>
        <end position="1959"/>
    </location>
</feature>
<feature type="non-terminal residue">
    <location>
        <position position="1"/>
    </location>
</feature>
<sequence>QEQHSQLEAAKTQVEKDMGEKISNLERELENANDLLCSTKRKGVMLSEEELTAMSPTAAAVAKVVKPGMKLTELYNAYVETQDKLLMEKQENKRITKYLDEIVKEVEAKSPILKRQREEYERMQKTVASLSAKLEQAMREIQRMQDETDKANKCSSVLERENQRLELQIKDLSQQIRVLLMELEEARGNFVQRDDVSSANISSSSEVITQHLVTYRNIEELQQQNQRLLVALRELGEAKEREEQESTSSRVSELEKELENALSELQQLREARSHQMTLVESIVRQRDMYRILLSQTTGVVLPAQDETALTSTPRKSPGVSLDGSTSTPAAVVVSDSTEAAEARAALKQLQEVFENYRKEKAENDRMLNEQHDKLQEQVTELRSQNTKISTQLEFASKRYEMLQDNVEGYRREITALQEKTQKLSATTQKQEQIINTLTHDLRAANEKLAVAEVRAENLKREKELLKMSEVRLTQERESLVAEQRGQNLLLTNLQTIQVTLERSETEIKQRYNNQIEKLEQELAQTKKKLEHEIEQRHLLGKNQDVQVLELKKQYEMELNLHNNTKELLKNSHKEISVLKQQLNSFELQLASRSSQQAANRDKDVNIEDVEEIKTKLRQSEELVNDLKERLKTATSNVEQYRSVVLNLEESLNKEKQVTEEVRKTIEVRLKESSEYQSQLEKKMMESEKEKQELRDEKHKTVEQMEQQVTQLRQSLSSLQAEVQQALQRATTSASNEQKAKQDCQEQARIAAEAQNKYERELMLHAADVEALQAAKKQLTSASAIRHKCEETAQKAGSQLLESRASWEERERMLKEEVSQIQSRCKDLEKQNGLLHEQIESLSKKMVTSVQEGALNMSFGEEGKSQEQVMEILRFVRREKEIAEARFEVAQVECLRYRQRIEHMERELHELQDSLNAEREKVQVTAKTMAQHEELMKKTETMNVLIESNKILREENEKQEQELQQLQAKIRKLESNILPLQESNAELSEKSGMLQAEKKLLEEDVRRWRARTQHLLSQQKDTDAEEYKKLLSEREVNTKRIQQLTEETGKLKTEVARTNASLNTCQSQLQSVKDDLTKIKAEKEKLQKELDAKILDIQEKIKTITQVKKIGRRYKTQYEELKVTHDKMVAEASSAKADQLQEQASQKEVQELKDSLQRSEAKVTTMQTTVDNMQKTLDDKDNEIKEHQEQISRMQAELSHLHKDLQDKTAQEEQMRQQINEKEEKTKKTLLVVRQKLAQNNGAKEQLTRENEDLKQKNANLEQQKEELEVRMSALRSQYDGRISRLERELREQQERHHEQRDEPQETTRIPQQRQITLQPTTAAGERGSANTSEPPTANIKPTPSKVTTAAVPVNKSTPRASIRPMVTPAAVSTPTSTPTATVMPTTQVDQQEVQSEGQMEHVPVFGSASGSVRSTSPNVQSSLPQPILTLQQQTQTTAFVQPTQQSHATIESPTQETPVEIVQSSPVERPTTSSTFGTYSATPSSSIPKRPREEEEDSTIETPEQIADDTDQQRTKKRKEEDIEEKTETEAVINTEDALHILTQCSNMEFPLEEEIVESPIQTSQVIESQAPEQLQNVQSTQDSLQDTPPKKTHNLVIVISDEENEDEQEGYEEEEQEDEEEDEDDAGIGEGDDSNEETGSADGNEDYEGDDAEEADGTDPDTETEDSMTAGEGNQRAADSQNIGDSGVVTAESTFSQETREQPSSASDRQGPRPPQSPRRQAHPPRLTILAPPQELGPPPAQRIPVARRQSVGRGLQLTPGVGGMQHFFDEEDRTVPSTPTLVVPHRTDGFAEAIHSPQVAGVPRFRFGPPEDMPQASSSHSDLGQLASQGGLGMYDTPLFLAHEEESGGRSVPTTPLQVAAPVSVFAENPAADTSDHASQSVPMVTTSTGNVPTSVDSGAADEGDEVFVEAESEGIGAESTLEMDTQQEEPVQPSEADLPSTSQDPPSSSIADTSSSKPKPRRVWLQPQPGGRPFKRSRGGSDFRGRGGINRSNI</sequence>
<reference key="1">
    <citation type="journal article" date="1997" name="J. Cell Biol.">
        <title>Identification of protein p270/Tpr as a constitutive component of the nuclear pore complex-attached intranuclear filaments.</title>
        <authorList>
            <person name="Cordes V.C."/>
            <person name="Reidenbach S."/>
            <person name="Rackwitz H.R."/>
            <person name="Franke W.W."/>
        </authorList>
    </citation>
    <scope>NUCLEOTIDE SEQUENCE [MRNA]</scope>
    <scope>SUBCELLULAR LOCATION</scope>
    <scope>TISSUE SPECIFICITY</scope>
    <source>
        <tissue>Kidney</tissue>
    </source>
</reference>
<reference key="2">
    <citation type="submission" date="2005-01" db="EMBL/GenBank/DDBJ databases">
        <title>Serological screening of cDNA expression library.</title>
        <authorList>
            <person name="Yang H.S."/>
            <person name="Deng H.X."/>
            <person name="Peng F."/>
            <person name="Zhao X."/>
            <person name="Wei Y.Q."/>
        </authorList>
    </citation>
    <scope>NUCLEOTIDE SEQUENCE [MRNA]</scope>
</reference>
<reference key="3">
    <citation type="journal article" date="1998" name="J. Cell Biol.">
        <title>Major binding sites for the nuclear import receptor are the internal nucleoporin Nup153 and the adjacent nuclear filament protein Tpr.</title>
        <authorList>
            <person name="Shah S."/>
            <person name="Tugendreich S."/>
            <person name="Forbes D."/>
        </authorList>
    </citation>
    <scope>INTERACTS WITH KPNB1</scope>
    <scope>SUBCELLULAR LOCATION</scope>
    <scope>TISSUE SPECIFICITY</scope>
</reference>
<dbReference type="EMBL" id="U69669">
    <property type="protein sequence ID" value="AAB48031.1"/>
    <property type="molecule type" value="mRNA"/>
</dbReference>
<dbReference type="EMBL" id="AY902464">
    <property type="protein sequence ID" value="AAW82480.1"/>
    <property type="molecule type" value="mRNA"/>
</dbReference>
<dbReference type="SMR" id="Q5EE04"/>
<dbReference type="AGR" id="Xenbase:XB-GENE-6252143"/>
<dbReference type="Xenbase" id="XB-GENE-6252143">
    <property type="gene designation" value="tpr.S"/>
</dbReference>
<dbReference type="Proteomes" id="UP000186698">
    <property type="component" value="Unplaced"/>
</dbReference>
<dbReference type="GO" id="GO:0000775">
    <property type="term" value="C:chromosome, centromeric region"/>
    <property type="evidence" value="ECO:0007669"/>
    <property type="project" value="UniProtKB-KW"/>
</dbReference>
<dbReference type="GO" id="GO:0005737">
    <property type="term" value="C:cytoplasm"/>
    <property type="evidence" value="ECO:0000250"/>
    <property type="project" value="UniProtKB"/>
</dbReference>
<dbReference type="GO" id="GO:0005868">
    <property type="term" value="C:cytoplasmic dynein complex"/>
    <property type="evidence" value="ECO:0000250"/>
    <property type="project" value="UniProtKB"/>
</dbReference>
<dbReference type="GO" id="GO:0072686">
    <property type="term" value="C:mitotic spindle"/>
    <property type="evidence" value="ECO:0000250"/>
    <property type="project" value="UniProtKB"/>
</dbReference>
<dbReference type="GO" id="GO:0042405">
    <property type="term" value="C:nuclear inclusion body"/>
    <property type="evidence" value="ECO:0000250"/>
    <property type="project" value="UniProtKB"/>
</dbReference>
<dbReference type="GO" id="GO:0031965">
    <property type="term" value="C:nuclear membrane"/>
    <property type="evidence" value="ECO:0000314"/>
    <property type="project" value="UniProtKB"/>
</dbReference>
<dbReference type="GO" id="GO:0034399">
    <property type="term" value="C:nuclear periphery"/>
    <property type="evidence" value="ECO:0000314"/>
    <property type="project" value="UniProtKB"/>
</dbReference>
<dbReference type="GO" id="GO:0005643">
    <property type="term" value="C:nuclear pore"/>
    <property type="evidence" value="ECO:0000250"/>
    <property type="project" value="UniProtKB"/>
</dbReference>
<dbReference type="GO" id="GO:0044615">
    <property type="term" value="C:nuclear pore nuclear basket"/>
    <property type="evidence" value="ECO:0000314"/>
    <property type="project" value="UniProtKB"/>
</dbReference>
<dbReference type="GO" id="GO:0003682">
    <property type="term" value="F:chromatin binding"/>
    <property type="evidence" value="ECO:0000250"/>
    <property type="project" value="UniProtKB"/>
</dbReference>
<dbReference type="GO" id="GO:0031072">
    <property type="term" value="F:heat shock protein binding"/>
    <property type="evidence" value="ECO:0000250"/>
    <property type="project" value="UniProtKB"/>
</dbReference>
<dbReference type="GO" id="GO:0051019">
    <property type="term" value="F:mitogen-activated protein kinase binding"/>
    <property type="evidence" value="ECO:0000250"/>
    <property type="project" value="UniProtKB"/>
</dbReference>
<dbReference type="GO" id="GO:0003729">
    <property type="term" value="F:mRNA binding"/>
    <property type="evidence" value="ECO:0000250"/>
    <property type="project" value="UniProtKB"/>
</dbReference>
<dbReference type="GO" id="GO:0042803">
    <property type="term" value="F:protein homodimerization activity"/>
    <property type="evidence" value="ECO:0000250"/>
    <property type="project" value="UniProtKB"/>
</dbReference>
<dbReference type="GO" id="GO:0017056">
    <property type="term" value="F:structural constituent of nuclear pore"/>
    <property type="evidence" value="ECO:0000250"/>
    <property type="project" value="UniProtKB"/>
</dbReference>
<dbReference type="GO" id="GO:0051301">
    <property type="term" value="P:cell division"/>
    <property type="evidence" value="ECO:0007669"/>
    <property type="project" value="UniProtKB-KW"/>
</dbReference>
<dbReference type="GO" id="GO:0034605">
    <property type="term" value="P:cellular response to heat"/>
    <property type="evidence" value="ECO:0000250"/>
    <property type="project" value="UniProtKB"/>
</dbReference>
<dbReference type="GO" id="GO:0007094">
    <property type="term" value="P:mitotic spindle assembly checkpoint signaling"/>
    <property type="evidence" value="ECO:0000250"/>
    <property type="project" value="UniProtKB"/>
</dbReference>
<dbReference type="GO" id="GO:0006406">
    <property type="term" value="P:mRNA export from nucleus"/>
    <property type="evidence" value="ECO:0000318"/>
    <property type="project" value="GO_Central"/>
</dbReference>
<dbReference type="GO" id="GO:0031990">
    <property type="term" value="P:mRNA export from nucleus in response to heat stress"/>
    <property type="evidence" value="ECO:0000250"/>
    <property type="project" value="UniProtKB"/>
</dbReference>
<dbReference type="GO" id="GO:0046832">
    <property type="term" value="P:negative regulation of RNA export from nucleus"/>
    <property type="evidence" value="ECO:0000250"/>
    <property type="project" value="UniProtKB"/>
</dbReference>
<dbReference type="GO" id="GO:0000122">
    <property type="term" value="P:negative regulation of transcription by RNA polymerase II"/>
    <property type="evidence" value="ECO:0000250"/>
    <property type="project" value="UniProtKB"/>
</dbReference>
<dbReference type="GO" id="GO:0045947">
    <property type="term" value="P:negative regulation of translational initiation"/>
    <property type="evidence" value="ECO:0000250"/>
    <property type="project" value="UniProtKB"/>
</dbReference>
<dbReference type="GO" id="GO:0031453">
    <property type="term" value="P:positive regulation of heterochromatin formation"/>
    <property type="evidence" value="ECO:0000250"/>
    <property type="project" value="UniProtKB"/>
</dbReference>
<dbReference type="GO" id="GO:0090316">
    <property type="term" value="P:positive regulation of intracellular protein transport"/>
    <property type="evidence" value="ECO:0000250"/>
    <property type="project" value="UniProtKB"/>
</dbReference>
<dbReference type="GO" id="GO:0090267">
    <property type="term" value="P:positive regulation of mitotic cell cycle spindle assembly checkpoint"/>
    <property type="evidence" value="ECO:0000250"/>
    <property type="project" value="UniProtKB"/>
</dbReference>
<dbReference type="GO" id="GO:0046827">
    <property type="term" value="P:positive regulation of protein export from nucleus"/>
    <property type="evidence" value="ECO:0000250"/>
    <property type="project" value="UniProtKB"/>
</dbReference>
<dbReference type="GO" id="GO:0042307">
    <property type="term" value="P:positive regulation of protein import into nucleus"/>
    <property type="evidence" value="ECO:0000250"/>
    <property type="project" value="UniProtKB"/>
</dbReference>
<dbReference type="GO" id="GO:0015031">
    <property type="term" value="P:protein transport"/>
    <property type="evidence" value="ECO:0007669"/>
    <property type="project" value="UniProtKB-KW"/>
</dbReference>
<dbReference type="GO" id="GO:0010965">
    <property type="term" value="P:regulation of mitotic sister chromatid separation"/>
    <property type="evidence" value="ECO:0000250"/>
    <property type="project" value="UniProtKB"/>
</dbReference>
<dbReference type="GO" id="GO:1901673">
    <property type="term" value="P:regulation of mitotic spindle assembly"/>
    <property type="evidence" value="ECO:0000250"/>
    <property type="project" value="UniProtKB"/>
</dbReference>
<dbReference type="GO" id="GO:0070849">
    <property type="term" value="P:response to epidermal growth factor"/>
    <property type="evidence" value="ECO:0000250"/>
    <property type="project" value="UniProtKB"/>
</dbReference>
<dbReference type="GO" id="GO:0006405">
    <property type="term" value="P:RNA export from nucleus"/>
    <property type="evidence" value="ECO:0000250"/>
    <property type="project" value="UniProtKB"/>
</dbReference>
<dbReference type="GO" id="GO:0006404">
    <property type="term" value="P:RNA import into nucleus"/>
    <property type="evidence" value="ECO:0000250"/>
    <property type="project" value="UniProtKB"/>
</dbReference>
<dbReference type="FunFam" id="1.10.287.1490:FF:000004">
    <property type="entry name" value="nucleoprotein TPR isoform X2"/>
    <property type="match status" value="1"/>
</dbReference>
<dbReference type="Gene3D" id="1.10.287.1490">
    <property type="match status" value="2"/>
</dbReference>
<dbReference type="InterPro" id="IPR012929">
    <property type="entry name" value="TPR/MLP1"/>
</dbReference>
<dbReference type="PANTHER" id="PTHR18898:SF2">
    <property type="entry name" value="NUCLEOPROTEIN TPR"/>
    <property type="match status" value="1"/>
</dbReference>
<dbReference type="PANTHER" id="PTHR18898">
    <property type="entry name" value="NUCLEOPROTEIN TPR-RELATED"/>
    <property type="match status" value="1"/>
</dbReference>
<dbReference type="Pfam" id="PF07926">
    <property type="entry name" value="TPR_MLP1_2"/>
    <property type="match status" value="1"/>
</dbReference>
<evidence type="ECO:0000250" key="1"/>
<evidence type="ECO:0000250" key="2">
    <source>
        <dbReference type="UniProtKB" id="P12270"/>
    </source>
</evidence>
<evidence type="ECO:0000255" key="3"/>
<evidence type="ECO:0000256" key="4">
    <source>
        <dbReference type="SAM" id="MobiDB-lite"/>
    </source>
</evidence>
<evidence type="ECO:0000269" key="5">
    <source>
    </source>
</evidence>
<evidence type="ECO:0000269" key="6">
    <source>
    </source>
</evidence>
<evidence type="ECO:0000305" key="7"/>
<comment type="function">
    <text evidence="1">Component of the nuclear pore complex (NPC), a complex required for the trafficking across the nuclear envelope. Functions as a scaffolding element in the nuclear phase of the NPC essential for normal nucleocytoplasmic transport of proteins and mRNAs, plays a role in the establishment of nuclear-peripheral chromatin compartmentalization in interphase, and in the mitotic spindle checkpoint signaling during mitosis. Involved in the quality control and retention of unspliced mRNAs in the nucleus. Implicated in nuclear export of mRNAs transcribed from heat shock gene promoters. May play a limited role in the regulation of nuclear protein export. May be involved in the formation and/or maintenance of NPC-associated perinuclear heterochromatin exclusion zones (HEZs). Finally, may act as a spatial regulator of the spindle-assembly checkpoint (SAC) response (By similarity).</text>
</comment>
<comment type="subunit">
    <text evidence="1">Homodimer. Part of the nuclear pore complex (NPC) (By similarity). Interacts with nuclear receptor KPNB1; the interaction occurs in a RanGTP-dependent manner. Associates with the Importin alpha/Importin beta receptor.</text>
</comment>
<comment type="subcellular location">
    <subcellularLocation>
        <location evidence="2">Nucleus</location>
    </subcellularLocation>
    <subcellularLocation>
        <location evidence="2">Nucleus membrane</location>
        <topology evidence="2">Peripheral membrane protein</topology>
        <orientation evidence="2 6">Nucleoplasmic side</orientation>
    </subcellularLocation>
    <subcellularLocation>
        <location evidence="2">Nucleus envelope</location>
    </subcellularLocation>
    <subcellularLocation>
        <location evidence="5">Nucleus</location>
        <location evidence="5">Nuclear pore complex</location>
    </subcellularLocation>
    <subcellularLocation>
        <location evidence="2">Cytoplasm</location>
    </subcellularLocation>
    <subcellularLocation>
        <location evidence="2">Cytoplasm</location>
        <location evidence="2">Cytoskeleton</location>
        <location evidence="2">Spindle</location>
    </subcellularLocation>
    <subcellularLocation>
        <location evidence="2">Chromosome</location>
        <location evidence="2">Centromere</location>
        <location evidence="2">Kinetochore</location>
    </subcellularLocation>
    <subcellularLocation>
        <location evidence="2">Nucleus membrane</location>
        <topology evidence="2">Peripheral membrane protein</topology>
        <orientation evidence="2">Cytoplasmic side</orientation>
    </subcellularLocation>
    <text evidence="5 6">Localized to the nucleoplasmic side of the nuclear pore complex (NPC) core structure, forming a fibrous structure called the nuclear basket. Localized to the nuclear periphery and in intranuclear spheroidal structures. Localized at NPC-attached intranuclear filament bundles projecting into the nuclear interior (PubMed:9024684). Colocalized with nup153 at the nuclear pore complex (PubMed:9531546).</text>
</comment>
<comment type="tissue specificity">
    <text evidence="5 6">Expressed in epithelial cells, oocytes and egg (at protein level).</text>
</comment>
<comment type="similarity">
    <text evidence="7">Belongs to the TPR family.</text>
</comment>
<name>TPR_XENLA</name>